<dbReference type="EC" id="2.5.1.61" evidence="1"/>
<dbReference type="EMBL" id="CP000141">
    <property type="protein sequence ID" value="ABB15447.1"/>
    <property type="molecule type" value="Genomic_DNA"/>
</dbReference>
<dbReference type="RefSeq" id="WP_011344127.1">
    <property type="nucleotide sequence ID" value="NC_007503.1"/>
</dbReference>
<dbReference type="SMR" id="Q3ACT3"/>
<dbReference type="FunCoup" id="Q3ACT3">
    <property type="interactions" value="437"/>
</dbReference>
<dbReference type="STRING" id="246194.CHY_1208"/>
<dbReference type="KEGG" id="chy:CHY_1208"/>
<dbReference type="eggNOG" id="COG0181">
    <property type="taxonomic scope" value="Bacteria"/>
</dbReference>
<dbReference type="HOGENOM" id="CLU_019704_0_2_9"/>
<dbReference type="InParanoid" id="Q3ACT3"/>
<dbReference type="OrthoDB" id="9810298at2"/>
<dbReference type="UniPathway" id="UPA00251">
    <property type="reaction ID" value="UER00319"/>
</dbReference>
<dbReference type="Proteomes" id="UP000002706">
    <property type="component" value="Chromosome"/>
</dbReference>
<dbReference type="GO" id="GO:0005737">
    <property type="term" value="C:cytoplasm"/>
    <property type="evidence" value="ECO:0007669"/>
    <property type="project" value="TreeGrafter"/>
</dbReference>
<dbReference type="GO" id="GO:0004418">
    <property type="term" value="F:hydroxymethylbilane synthase activity"/>
    <property type="evidence" value="ECO:0007669"/>
    <property type="project" value="UniProtKB-UniRule"/>
</dbReference>
<dbReference type="GO" id="GO:0006782">
    <property type="term" value="P:protoporphyrinogen IX biosynthetic process"/>
    <property type="evidence" value="ECO:0007669"/>
    <property type="project" value="UniProtKB-UniRule"/>
</dbReference>
<dbReference type="CDD" id="cd13646">
    <property type="entry name" value="PBP2_EcHMBS_like"/>
    <property type="match status" value="1"/>
</dbReference>
<dbReference type="FunFam" id="3.30.160.40:FF:000002">
    <property type="entry name" value="Porphobilinogen deaminase"/>
    <property type="match status" value="1"/>
</dbReference>
<dbReference type="FunFam" id="3.40.190.10:FF:000004">
    <property type="entry name" value="Porphobilinogen deaminase"/>
    <property type="match status" value="1"/>
</dbReference>
<dbReference type="FunFam" id="3.40.190.10:FF:000005">
    <property type="entry name" value="Porphobilinogen deaminase"/>
    <property type="match status" value="1"/>
</dbReference>
<dbReference type="Gene3D" id="3.40.190.10">
    <property type="entry name" value="Periplasmic binding protein-like II"/>
    <property type="match status" value="2"/>
</dbReference>
<dbReference type="Gene3D" id="3.30.160.40">
    <property type="entry name" value="Porphobilinogen deaminase, C-terminal domain"/>
    <property type="match status" value="1"/>
</dbReference>
<dbReference type="HAMAP" id="MF_00260">
    <property type="entry name" value="Porphobil_deam"/>
    <property type="match status" value="1"/>
</dbReference>
<dbReference type="InterPro" id="IPR000860">
    <property type="entry name" value="HemC"/>
</dbReference>
<dbReference type="InterPro" id="IPR022419">
    <property type="entry name" value="Porphobilin_deaminase_cofac_BS"/>
</dbReference>
<dbReference type="InterPro" id="IPR022417">
    <property type="entry name" value="Porphobilin_deaminase_N"/>
</dbReference>
<dbReference type="InterPro" id="IPR022418">
    <property type="entry name" value="Porphobilinogen_deaminase_C"/>
</dbReference>
<dbReference type="InterPro" id="IPR036803">
    <property type="entry name" value="Porphobilinogen_deaminase_C_sf"/>
</dbReference>
<dbReference type="NCBIfam" id="TIGR00212">
    <property type="entry name" value="hemC"/>
    <property type="match status" value="1"/>
</dbReference>
<dbReference type="PANTHER" id="PTHR11557">
    <property type="entry name" value="PORPHOBILINOGEN DEAMINASE"/>
    <property type="match status" value="1"/>
</dbReference>
<dbReference type="PANTHER" id="PTHR11557:SF0">
    <property type="entry name" value="PORPHOBILINOGEN DEAMINASE"/>
    <property type="match status" value="1"/>
</dbReference>
<dbReference type="Pfam" id="PF01379">
    <property type="entry name" value="Porphobil_deam"/>
    <property type="match status" value="1"/>
</dbReference>
<dbReference type="Pfam" id="PF03900">
    <property type="entry name" value="Porphobil_deamC"/>
    <property type="match status" value="1"/>
</dbReference>
<dbReference type="PIRSF" id="PIRSF001438">
    <property type="entry name" value="4pyrrol_synth_OHMeBilane_synth"/>
    <property type="match status" value="1"/>
</dbReference>
<dbReference type="PRINTS" id="PR00151">
    <property type="entry name" value="PORPHBDMNASE"/>
</dbReference>
<dbReference type="SUPFAM" id="SSF53850">
    <property type="entry name" value="Periplasmic binding protein-like II"/>
    <property type="match status" value="1"/>
</dbReference>
<dbReference type="SUPFAM" id="SSF54782">
    <property type="entry name" value="Porphobilinogen deaminase (hydroxymethylbilane synthase), C-terminal domain"/>
    <property type="match status" value="1"/>
</dbReference>
<dbReference type="PROSITE" id="PS00533">
    <property type="entry name" value="PORPHOBILINOGEN_DEAM"/>
    <property type="match status" value="1"/>
</dbReference>
<protein>
    <recommendedName>
        <fullName evidence="1">Porphobilinogen deaminase</fullName>
        <shortName evidence="1">PBG</shortName>
        <ecNumber evidence="1">2.5.1.61</ecNumber>
    </recommendedName>
    <alternativeName>
        <fullName evidence="1">Hydroxymethylbilane synthase</fullName>
        <shortName evidence="1">HMBS</shortName>
    </alternativeName>
    <alternativeName>
        <fullName evidence="1">Pre-uroporphyrinogen synthase</fullName>
    </alternativeName>
</protein>
<comment type="function">
    <text evidence="1">Tetrapolymerization of the monopyrrole PBG into the hydroxymethylbilane pre-uroporphyrinogen in several discrete steps.</text>
</comment>
<comment type="catalytic activity">
    <reaction evidence="1">
        <text>4 porphobilinogen + H2O = hydroxymethylbilane + 4 NH4(+)</text>
        <dbReference type="Rhea" id="RHEA:13185"/>
        <dbReference type="ChEBI" id="CHEBI:15377"/>
        <dbReference type="ChEBI" id="CHEBI:28938"/>
        <dbReference type="ChEBI" id="CHEBI:57845"/>
        <dbReference type="ChEBI" id="CHEBI:58126"/>
        <dbReference type="EC" id="2.5.1.61"/>
    </reaction>
</comment>
<comment type="cofactor">
    <cofactor evidence="1">
        <name>dipyrromethane</name>
        <dbReference type="ChEBI" id="CHEBI:60342"/>
    </cofactor>
    <text evidence="1">Binds 1 dipyrromethane group covalently.</text>
</comment>
<comment type="pathway">
    <text evidence="1">Porphyrin-containing compound metabolism; protoporphyrin-IX biosynthesis; coproporphyrinogen-III from 5-aminolevulinate: step 2/4.</text>
</comment>
<comment type="subunit">
    <text evidence="1">Monomer.</text>
</comment>
<comment type="miscellaneous">
    <text evidence="1">The porphobilinogen subunits are added to the dipyrromethane group.</text>
</comment>
<comment type="similarity">
    <text evidence="1">Belongs to the HMBS family.</text>
</comment>
<evidence type="ECO:0000255" key="1">
    <source>
        <dbReference type="HAMAP-Rule" id="MF_00260"/>
    </source>
</evidence>
<reference key="1">
    <citation type="journal article" date="2005" name="PLoS Genet.">
        <title>Life in hot carbon monoxide: the complete genome sequence of Carboxydothermus hydrogenoformans Z-2901.</title>
        <authorList>
            <person name="Wu M."/>
            <person name="Ren Q."/>
            <person name="Durkin A.S."/>
            <person name="Daugherty S.C."/>
            <person name="Brinkac L.M."/>
            <person name="Dodson R.J."/>
            <person name="Madupu R."/>
            <person name="Sullivan S.A."/>
            <person name="Kolonay J.F."/>
            <person name="Nelson W.C."/>
            <person name="Tallon L.J."/>
            <person name="Jones K.M."/>
            <person name="Ulrich L.E."/>
            <person name="Gonzalez J.M."/>
            <person name="Zhulin I.B."/>
            <person name="Robb F.T."/>
            <person name="Eisen J.A."/>
        </authorList>
    </citation>
    <scope>NUCLEOTIDE SEQUENCE [LARGE SCALE GENOMIC DNA]</scope>
    <source>
        <strain>ATCC BAA-161 / DSM 6008 / Z-2901</strain>
    </source>
</reference>
<organism>
    <name type="scientific">Carboxydothermus hydrogenoformans (strain ATCC BAA-161 / DSM 6008 / Z-2901)</name>
    <dbReference type="NCBI Taxonomy" id="246194"/>
    <lineage>
        <taxon>Bacteria</taxon>
        <taxon>Bacillati</taxon>
        <taxon>Bacillota</taxon>
        <taxon>Clostridia</taxon>
        <taxon>Thermoanaerobacterales</taxon>
        <taxon>Thermoanaerobacteraceae</taxon>
        <taxon>Carboxydothermus</taxon>
    </lineage>
</organism>
<gene>
    <name evidence="1" type="primary">hemC</name>
    <name type="ordered locus">CHY_1208</name>
</gene>
<name>HEM3_CARHZ</name>
<feature type="chain" id="PRO_0000304225" description="Porphobilinogen deaminase">
    <location>
        <begin position="1"/>
        <end position="311"/>
    </location>
</feature>
<feature type="modified residue" description="S-(dipyrrolylmethanemethyl)cysteine" evidence="1">
    <location>
        <position position="241"/>
    </location>
</feature>
<keyword id="KW-0627">Porphyrin biosynthesis</keyword>
<keyword id="KW-1185">Reference proteome</keyword>
<keyword id="KW-0808">Transferase</keyword>
<proteinExistence type="inferred from homology"/>
<sequence>MKKEVIVGSRDSALALWQTNWVVERLSKIHPEINFKIVTMKTKGDKILDVALAKIGDKGLFTKELEHALLNKTIDMAVHSMKDLPTVLPEGLKIGAFCEREYPGDVFISPKGFKFLELPQGARIGTSSLRRIAQILAVRPDLQAIPLRGNLPTRFRKMEEMDLDGIILAYAGVKRLGYEDKITEMLSFDLCLPAVGQGSIGVEIRADDTFIEELLKPIDHFATNRAIRAERAFLKRLEGGCQIPIGAYSEVKENRLHLKGVVASLDGKLVIKGEKEGSIEEPEKVGISLAEELLTKGAQKILEEIRRDANE</sequence>
<accession>Q3ACT3</accession>